<gene>
    <name type="primary">TFAP2A</name>
</gene>
<keyword id="KW-0010">Activator</keyword>
<keyword id="KW-0025">Alternative splicing</keyword>
<keyword id="KW-0238">DNA-binding</keyword>
<keyword id="KW-1017">Isopeptide bond</keyword>
<keyword id="KW-0539">Nucleus</keyword>
<keyword id="KW-0597">Phosphoprotein</keyword>
<keyword id="KW-1185">Reference proteome</keyword>
<keyword id="KW-0804">Transcription</keyword>
<keyword id="KW-0805">Transcription regulation</keyword>
<keyword id="KW-0832">Ubl conjugation</keyword>
<feature type="chain" id="PRO_0000184799" description="Transcription factor AP-2-alpha">
    <location>
        <begin position="1"/>
        <end position="491"/>
    </location>
</feature>
<feature type="region of interest" description="Disordered" evidence="3">
    <location>
        <begin position="74"/>
        <end position="161"/>
    </location>
</feature>
<feature type="region of interest" description="H-S-H (helix-span-helix), dimerization" evidence="2">
    <location>
        <begin position="334"/>
        <end position="464"/>
    </location>
</feature>
<feature type="region of interest" description="Disordered" evidence="3">
    <location>
        <begin position="468"/>
        <end position="491"/>
    </location>
</feature>
<feature type="short sequence motif" description="PPxY motif">
    <location>
        <begin position="111"/>
        <end position="116"/>
    </location>
</feature>
<feature type="compositionally biased region" description="Low complexity" evidence="3">
    <location>
        <begin position="119"/>
        <end position="128"/>
    </location>
</feature>
<feature type="compositionally biased region" description="Low complexity" evidence="3">
    <location>
        <begin position="142"/>
        <end position="155"/>
    </location>
</feature>
<feature type="compositionally biased region" description="Polar residues" evidence="3">
    <location>
        <begin position="468"/>
        <end position="481"/>
    </location>
</feature>
<feature type="compositionally biased region" description="Basic and acidic residues" evidence="3">
    <location>
        <begin position="482"/>
        <end position="491"/>
    </location>
</feature>
<feature type="modified residue" description="Phosphoserine; by PKA" evidence="2">
    <location>
        <position position="293"/>
    </location>
</feature>
<feature type="cross-link" description="Glycyl lysine isopeptide (Lys-Gly) (interchain with G-Cter in SUMO2)" evidence="2">
    <location>
        <position position="231"/>
    </location>
</feature>
<feature type="cross-link" description="Glycyl lysine isopeptide (Lys-Gly) (interchain with G-Cter in SUMO2)" evidence="2">
    <location>
        <position position="238"/>
    </location>
</feature>
<feature type="splice variant" id="VSP_006405" description="In isoform 2." evidence="4">
    <original>MPPRLASVKIPYDWGRKGPFRFWRIFCQSRAVGWFLAAACGRAGRFRTQPAEWPTPDAVFSPLGLALFQ</original>
    <variation>MSILAKMGDWQ</variation>
    <location>
        <begin position="1"/>
        <end position="69"/>
    </location>
</feature>
<feature type="splice variant" id="VSP_006406" description="In isoform 3." evidence="4">
    <original>MPPRLASVKIPYDWGRKGPFRFWRIFCQSRAVGWFLAAACGRAGRFRTQPAEWPTPDAVFSPLGLALFQ</original>
    <variation>MLVHSFSAM</variation>
    <location>
        <begin position="1"/>
        <end position="69"/>
    </location>
</feature>
<feature type="splice variant" id="VSP_006407" description="In isoform 3." evidence="4">
    <location>
        <begin position="88"/>
        <end position="135"/>
    </location>
</feature>
<dbReference type="EMBL" id="AF260570">
    <property type="protein sequence ID" value="AAF70347.1"/>
    <property type="molecule type" value="mRNA"/>
</dbReference>
<dbReference type="EMBL" id="AF260569">
    <property type="protein sequence ID" value="AAF70346.1"/>
    <property type="molecule type" value="mRNA"/>
</dbReference>
<dbReference type="EMBL" id="AF260568">
    <property type="protein sequence ID" value="AAF70345.1"/>
    <property type="molecule type" value="mRNA"/>
</dbReference>
<dbReference type="RefSeq" id="NP_001009745.1">
    <molecule id="Q9N0N3-1"/>
    <property type="nucleotide sequence ID" value="NM_001009745.1"/>
</dbReference>
<dbReference type="RefSeq" id="XP_042092664.1">
    <molecule id="Q9N0N3-2"/>
    <property type="nucleotide sequence ID" value="XM_042236730.2"/>
</dbReference>
<dbReference type="SMR" id="Q9N0N3"/>
<dbReference type="STRING" id="9940.ENSOARP00000017604"/>
<dbReference type="PaxDb" id="9940-ENSOARP00000017604"/>
<dbReference type="GeneID" id="443109"/>
<dbReference type="KEGG" id="oas:443109"/>
<dbReference type="CTD" id="7020"/>
<dbReference type="eggNOG" id="KOG3811">
    <property type="taxonomic scope" value="Eukaryota"/>
</dbReference>
<dbReference type="OrthoDB" id="6252992at2759"/>
<dbReference type="Proteomes" id="UP000002356">
    <property type="component" value="Unplaced"/>
</dbReference>
<dbReference type="GO" id="GO:0005634">
    <property type="term" value="C:nucleus"/>
    <property type="evidence" value="ECO:0000250"/>
    <property type="project" value="UniProtKB"/>
</dbReference>
<dbReference type="GO" id="GO:0003682">
    <property type="term" value="F:chromatin binding"/>
    <property type="evidence" value="ECO:0000250"/>
    <property type="project" value="UniProtKB"/>
</dbReference>
<dbReference type="GO" id="GO:0001228">
    <property type="term" value="F:DNA-binding transcription activator activity, RNA polymerase II-specific"/>
    <property type="evidence" value="ECO:0000250"/>
    <property type="project" value="UniProtKB"/>
</dbReference>
<dbReference type="GO" id="GO:0000981">
    <property type="term" value="F:DNA-binding transcription factor activity, RNA polymerase II-specific"/>
    <property type="evidence" value="ECO:0000250"/>
    <property type="project" value="UniProtKB"/>
</dbReference>
<dbReference type="GO" id="GO:0001227">
    <property type="term" value="F:DNA-binding transcription repressor activity, RNA polymerase II-specific"/>
    <property type="evidence" value="ECO:0000250"/>
    <property type="project" value="UniProtKB"/>
</dbReference>
<dbReference type="GO" id="GO:0000978">
    <property type="term" value="F:RNA polymerase II cis-regulatory region sequence-specific DNA binding"/>
    <property type="evidence" value="ECO:0000250"/>
    <property type="project" value="UniProtKB"/>
</dbReference>
<dbReference type="GO" id="GO:0000976">
    <property type="term" value="F:transcription cis-regulatory region binding"/>
    <property type="evidence" value="ECO:0000250"/>
    <property type="project" value="UniProtKB"/>
</dbReference>
<dbReference type="GO" id="GO:0060349">
    <property type="term" value="P:bone morphogenesis"/>
    <property type="evidence" value="ECO:0000250"/>
    <property type="project" value="UniProtKB"/>
</dbReference>
<dbReference type="GO" id="GO:0071281">
    <property type="term" value="P:cellular response to iron ion"/>
    <property type="evidence" value="ECO:0000250"/>
    <property type="project" value="UniProtKB"/>
</dbReference>
<dbReference type="GO" id="GO:0048701">
    <property type="term" value="P:embryonic cranial skeleton morphogenesis"/>
    <property type="evidence" value="ECO:0000250"/>
    <property type="project" value="UniProtKB"/>
</dbReference>
<dbReference type="GO" id="GO:0035115">
    <property type="term" value="P:embryonic forelimb morphogenesis"/>
    <property type="evidence" value="ECO:0000250"/>
    <property type="project" value="UniProtKB"/>
</dbReference>
<dbReference type="GO" id="GO:0061029">
    <property type="term" value="P:eyelid development in camera-type eye"/>
    <property type="evidence" value="ECO:0000250"/>
    <property type="project" value="UniProtKB"/>
</dbReference>
<dbReference type="GO" id="GO:0042472">
    <property type="term" value="P:inner ear morphogenesis"/>
    <property type="evidence" value="ECO:0000250"/>
    <property type="project" value="UniProtKB"/>
</dbReference>
<dbReference type="GO" id="GO:0001822">
    <property type="term" value="P:kidney development"/>
    <property type="evidence" value="ECO:0000250"/>
    <property type="project" value="UniProtKB"/>
</dbReference>
<dbReference type="GO" id="GO:0043066">
    <property type="term" value="P:negative regulation of apoptotic process"/>
    <property type="evidence" value="ECO:0000250"/>
    <property type="project" value="UniProtKB"/>
</dbReference>
<dbReference type="GO" id="GO:2000378">
    <property type="term" value="P:negative regulation of reactive oxygen species metabolic process"/>
    <property type="evidence" value="ECO:0000250"/>
    <property type="project" value="UniProtKB"/>
</dbReference>
<dbReference type="GO" id="GO:0010944">
    <property type="term" value="P:negative regulation of transcription by competitive promoter binding"/>
    <property type="evidence" value="ECO:0000250"/>
    <property type="project" value="UniProtKB"/>
</dbReference>
<dbReference type="GO" id="GO:0000122">
    <property type="term" value="P:negative regulation of transcription by RNA polymerase II"/>
    <property type="evidence" value="ECO:0000250"/>
    <property type="project" value="UniProtKB"/>
</dbReference>
<dbReference type="GO" id="GO:0021623">
    <property type="term" value="P:oculomotor nerve formation"/>
    <property type="evidence" value="ECO:0000250"/>
    <property type="project" value="UniProtKB"/>
</dbReference>
<dbReference type="GO" id="GO:0003409">
    <property type="term" value="P:optic cup structural organization"/>
    <property type="evidence" value="ECO:0000250"/>
    <property type="project" value="UniProtKB"/>
</dbReference>
<dbReference type="GO" id="GO:0003404">
    <property type="term" value="P:optic vesicle morphogenesis"/>
    <property type="evidence" value="ECO:0000250"/>
    <property type="project" value="UniProtKB"/>
</dbReference>
<dbReference type="GO" id="GO:0030501">
    <property type="term" value="P:positive regulation of bone mineralization"/>
    <property type="evidence" value="ECO:0000250"/>
    <property type="project" value="UniProtKB"/>
</dbReference>
<dbReference type="GO" id="GO:0045893">
    <property type="term" value="P:positive regulation of DNA-templated transcription"/>
    <property type="evidence" value="ECO:0000250"/>
    <property type="project" value="UniProtKB"/>
</dbReference>
<dbReference type="GO" id="GO:0010628">
    <property type="term" value="P:positive regulation of gene expression"/>
    <property type="evidence" value="ECO:0000250"/>
    <property type="project" value="UniProtKB"/>
</dbReference>
<dbReference type="GO" id="GO:0070172">
    <property type="term" value="P:positive regulation of tooth mineralization"/>
    <property type="evidence" value="ECO:0000250"/>
    <property type="project" value="UniProtKB"/>
</dbReference>
<dbReference type="GO" id="GO:0045944">
    <property type="term" value="P:positive regulation of transcription by RNA polymerase II"/>
    <property type="evidence" value="ECO:0000250"/>
    <property type="project" value="UniProtKB"/>
</dbReference>
<dbReference type="GO" id="GO:0042127">
    <property type="term" value="P:regulation of cell population proliferation"/>
    <property type="evidence" value="ECO:0007669"/>
    <property type="project" value="TreeGrafter"/>
</dbReference>
<dbReference type="GO" id="GO:0060021">
    <property type="term" value="P:roof of mouth development"/>
    <property type="evidence" value="ECO:0000250"/>
    <property type="project" value="UniProtKB"/>
</dbReference>
<dbReference type="GO" id="GO:0007605">
    <property type="term" value="P:sensory perception of sound"/>
    <property type="evidence" value="ECO:0000250"/>
    <property type="project" value="UniProtKB"/>
</dbReference>
<dbReference type="GO" id="GO:0021559">
    <property type="term" value="P:trigeminal nerve development"/>
    <property type="evidence" value="ECO:0000250"/>
    <property type="project" value="UniProtKB"/>
</dbReference>
<dbReference type="InterPro" id="IPR004979">
    <property type="entry name" value="TF_AP2"/>
</dbReference>
<dbReference type="InterPro" id="IPR008121">
    <property type="entry name" value="TF_AP2_alpha_N"/>
</dbReference>
<dbReference type="InterPro" id="IPR013854">
    <property type="entry name" value="TF_AP2_C"/>
</dbReference>
<dbReference type="PANTHER" id="PTHR10812">
    <property type="entry name" value="TRANSCRIPTION FACTOR AP-2"/>
    <property type="match status" value="1"/>
</dbReference>
<dbReference type="PANTHER" id="PTHR10812:SF8">
    <property type="entry name" value="TRANSCRIPTION FACTOR AP-2-ALPHA"/>
    <property type="match status" value="1"/>
</dbReference>
<dbReference type="Pfam" id="PF03299">
    <property type="entry name" value="TF_AP-2"/>
    <property type="match status" value="1"/>
</dbReference>
<dbReference type="PRINTS" id="PR01749">
    <property type="entry name" value="AP2ATNSCPFCT"/>
</dbReference>
<dbReference type="PRINTS" id="PR01748">
    <property type="entry name" value="AP2TNSCPFCT"/>
</dbReference>
<reference key="1">
    <citation type="journal article" date="2001" name="Eur. J. Biochem.">
        <title>Novel activator protein-2alpha splice-variants function as transactivators of the ovine placental lactogen gene.</title>
        <authorList>
            <person name="Limesand S.W."/>
            <person name="Anthony R.V."/>
        </authorList>
    </citation>
    <scope>NUCLEOTIDE SEQUENCE [MRNA] (ISOFORMS 1; 2 AND 3)</scope>
</reference>
<organism>
    <name type="scientific">Ovis aries</name>
    <name type="common">Sheep</name>
    <dbReference type="NCBI Taxonomy" id="9940"/>
    <lineage>
        <taxon>Eukaryota</taxon>
        <taxon>Metazoa</taxon>
        <taxon>Chordata</taxon>
        <taxon>Craniata</taxon>
        <taxon>Vertebrata</taxon>
        <taxon>Euteleostomi</taxon>
        <taxon>Mammalia</taxon>
        <taxon>Eutheria</taxon>
        <taxon>Laurasiatheria</taxon>
        <taxon>Artiodactyla</taxon>
        <taxon>Ruminantia</taxon>
        <taxon>Pecora</taxon>
        <taxon>Bovidae</taxon>
        <taxon>Caprinae</taxon>
        <taxon>Ovis</taxon>
    </lineage>
</organism>
<protein>
    <recommendedName>
        <fullName>Transcription factor AP-2-alpha</fullName>
        <shortName>AP2-alpha</shortName>
    </recommendedName>
    <alternativeName>
        <fullName>AP-2 transcription factor</fullName>
    </alternativeName>
    <alternativeName>
        <fullName>Activating enhancer-binding protein 2-alpha</fullName>
    </alternativeName>
    <alternativeName>
        <fullName>Activator protein 2</fullName>
        <shortName>AP-2</shortName>
    </alternativeName>
</protein>
<comment type="function">
    <text evidence="1">Sequence-specific DNA-binding protein that interacts with inducible viral and cellular enhancer elements to regulate transcription of selected genes. AP-2 factors bind to the consensus sequence 5'-GCCNNNGGC-3' and activate genes involved in a large spectrum of important biological functions including proper eye, face, body wall, limb and neural tube development. They also suppress a number of genes including MCAM/MUC18, C/EBP alpha and MYC. AP-2-alpha is the only AP-2 protein required for early morphogenesis of the lens vesicle. Together with the CITED2 coactivator, stimulates the PITX2 P1 promoter transcription activation. Associates with chromatin to the PITX2 P1 promoter region (By similarity).</text>
</comment>
<comment type="subunit">
    <text evidence="1">Binds DNA as a dimer. Can form homodimers or heterodimers with other AP-2 family members. Interacts with WWOX. Interacts with CITED4. Interacts with UBE2I. Interacts with RALBP1 in a complex also containing EPN1 and NUMB during interphase and mitosis. Interacts with KCTD1; this interaction represses transcription activation. Interacts (via C-terminus) with CITED2 (via C-terminus); the interaction stimulates TFAP2A-transcriptional activation. Interacts (via N-terminus) with EP300 (via N-terminus); the interaction requires CITED2 (By similarity). Interacts with KCTD15; this interaction inhibits TFAP2A transcriptional activation (By similarity).</text>
</comment>
<comment type="subcellular location">
    <subcellularLocation>
        <location evidence="5">Nucleus</location>
    </subcellularLocation>
</comment>
<comment type="alternative products">
    <event type="alternative splicing"/>
    <isoform>
        <id>Q9N0N3-1</id>
        <name>1</name>
        <name>Variant 4</name>
        <sequence type="displayed"/>
    </isoform>
    <isoform>
        <id>Q9N0N3-2</id>
        <name>2</name>
        <name>Variant 6</name>
        <sequence type="described" ref="VSP_006405"/>
    </isoform>
    <isoform>
        <id>Q9N0N3-3</id>
        <name>3</name>
        <name>Variant 7</name>
        <sequence type="described" ref="VSP_006406 VSP_006407"/>
    </isoform>
    <text>Additional isoforms seem to exist.</text>
</comment>
<comment type="domain">
    <text evidence="1">The PPxY motif mediates interaction with WWOX.</text>
</comment>
<comment type="similarity">
    <text evidence="5">Belongs to the AP-2 family.</text>
</comment>
<name>AP2A_SHEEP</name>
<sequence>MPPRLASVKIPYDWGRKGPFRFWRIFCQSRAVGWFLAAACGRAGRFRTQPAEWPTPDAVFSPLGLALFQDRHDGASNGTARLPQLGTVGQSPYTSAPPLSHTPNADFQPPYFPPPYQPIYPQSQDPYSHVNDPYSLNPLHAQPQPQHPGWPGQRQSQESGLLHTHRGLPHQLSGLDPRRDYRRHEDLLHGPHGLGSGLGDLPIHSLPHAIEDVPHVEDPGINIPDQTVIKKGPVSLSKSNSNAVSSIPINKDNLFGGVVNPNEVFCSVPGRLSLLSSTSKYKVTVAEVQRRLSPPECLNASLLGGVLRRAKSKNGGRSLREKLDKIGLNLPAGRRKAANVTLLTSLVEGEAVHLARDFGYVCETEFPAKAVAEFLNRQHSDPNEQVTRKNMLLATKQICKEFTDLLAQDRSPLGNSRPNPILEPGIQSCLTHFNLISHGFGSPAVCAAVTALQNYLTEALKAMDKMYLSNNPNSHTDNSAKSSDKEEKHRK</sequence>
<accession>Q9N0N3</accession>
<accession>Q9N0N4</accession>
<accession>Q9N0N5</accession>
<proteinExistence type="evidence at transcript level"/>
<evidence type="ECO:0000250" key="1"/>
<evidence type="ECO:0000250" key="2">
    <source>
        <dbReference type="UniProtKB" id="P05549"/>
    </source>
</evidence>
<evidence type="ECO:0000256" key="3">
    <source>
        <dbReference type="SAM" id="MobiDB-lite"/>
    </source>
</evidence>
<evidence type="ECO:0000303" key="4">
    <source>
    </source>
</evidence>
<evidence type="ECO:0000305" key="5"/>